<dbReference type="EC" id="2.7.2.3" evidence="1"/>
<dbReference type="EMBL" id="AP008981">
    <property type="protein sequence ID" value="BAG39462.1"/>
    <property type="molecule type" value="Genomic_DNA"/>
</dbReference>
<dbReference type="RefSeq" id="WP_012460728.1">
    <property type="nucleotide sequence ID" value="NC_010793.1"/>
</dbReference>
<dbReference type="SMR" id="B3CQC3"/>
<dbReference type="KEGG" id="ott:OTT_0004"/>
<dbReference type="HOGENOM" id="CLU_025427_0_2_5"/>
<dbReference type="OrthoDB" id="9808460at2"/>
<dbReference type="UniPathway" id="UPA00109">
    <property type="reaction ID" value="UER00185"/>
</dbReference>
<dbReference type="Proteomes" id="UP000001033">
    <property type="component" value="Chromosome"/>
</dbReference>
<dbReference type="GO" id="GO:0005829">
    <property type="term" value="C:cytosol"/>
    <property type="evidence" value="ECO:0007669"/>
    <property type="project" value="TreeGrafter"/>
</dbReference>
<dbReference type="GO" id="GO:0043531">
    <property type="term" value="F:ADP binding"/>
    <property type="evidence" value="ECO:0007669"/>
    <property type="project" value="TreeGrafter"/>
</dbReference>
<dbReference type="GO" id="GO:0005524">
    <property type="term" value="F:ATP binding"/>
    <property type="evidence" value="ECO:0007669"/>
    <property type="project" value="UniProtKB-KW"/>
</dbReference>
<dbReference type="GO" id="GO:0004618">
    <property type="term" value="F:phosphoglycerate kinase activity"/>
    <property type="evidence" value="ECO:0007669"/>
    <property type="project" value="UniProtKB-UniRule"/>
</dbReference>
<dbReference type="GO" id="GO:0006094">
    <property type="term" value="P:gluconeogenesis"/>
    <property type="evidence" value="ECO:0007669"/>
    <property type="project" value="TreeGrafter"/>
</dbReference>
<dbReference type="GO" id="GO:0006096">
    <property type="term" value="P:glycolytic process"/>
    <property type="evidence" value="ECO:0007669"/>
    <property type="project" value="UniProtKB-UniRule"/>
</dbReference>
<dbReference type="FunFam" id="3.40.50.1260:FF:000006">
    <property type="entry name" value="Phosphoglycerate kinase"/>
    <property type="match status" value="1"/>
</dbReference>
<dbReference type="FunFam" id="3.40.50.1260:FF:000031">
    <property type="entry name" value="Phosphoglycerate kinase 1"/>
    <property type="match status" value="1"/>
</dbReference>
<dbReference type="Gene3D" id="3.40.50.1260">
    <property type="entry name" value="Phosphoglycerate kinase, N-terminal domain"/>
    <property type="match status" value="2"/>
</dbReference>
<dbReference type="HAMAP" id="MF_00145">
    <property type="entry name" value="Phosphoglyc_kinase"/>
    <property type="match status" value="1"/>
</dbReference>
<dbReference type="InterPro" id="IPR001576">
    <property type="entry name" value="Phosphoglycerate_kinase"/>
</dbReference>
<dbReference type="InterPro" id="IPR015824">
    <property type="entry name" value="Phosphoglycerate_kinase_N"/>
</dbReference>
<dbReference type="InterPro" id="IPR036043">
    <property type="entry name" value="Phosphoglycerate_kinase_sf"/>
</dbReference>
<dbReference type="PANTHER" id="PTHR11406">
    <property type="entry name" value="PHOSPHOGLYCERATE KINASE"/>
    <property type="match status" value="1"/>
</dbReference>
<dbReference type="PANTHER" id="PTHR11406:SF23">
    <property type="entry name" value="PHOSPHOGLYCERATE KINASE 1, CHLOROPLASTIC-RELATED"/>
    <property type="match status" value="1"/>
</dbReference>
<dbReference type="Pfam" id="PF00162">
    <property type="entry name" value="PGK"/>
    <property type="match status" value="1"/>
</dbReference>
<dbReference type="PIRSF" id="PIRSF000724">
    <property type="entry name" value="Pgk"/>
    <property type="match status" value="1"/>
</dbReference>
<dbReference type="PRINTS" id="PR00477">
    <property type="entry name" value="PHGLYCKINASE"/>
</dbReference>
<dbReference type="SUPFAM" id="SSF53748">
    <property type="entry name" value="Phosphoglycerate kinase"/>
    <property type="match status" value="1"/>
</dbReference>
<gene>
    <name evidence="1" type="primary">pgk</name>
    <name type="ordered locus">OTT_0004</name>
</gene>
<feature type="chain" id="PRO_1000096362" description="Phosphoglycerate kinase">
    <location>
        <begin position="1"/>
        <end position="406"/>
    </location>
</feature>
<feature type="binding site" evidence="1">
    <location>
        <begin position="22"/>
        <end position="24"/>
    </location>
    <ligand>
        <name>substrate</name>
    </ligand>
</feature>
<feature type="binding site" evidence="1">
    <location>
        <position position="37"/>
    </location>
    <ligand>
        <name>substrate</name>
    </ligand>
</feature>
<feature type="binding site" evidence="1">
    <location>
        <begin position="60"/>
        <end position="63"/>
    </location>
    <ligand>
        <name>substrate</name>
    </ligand>
</feature>
<feature type="binding site" evidence="1">
    <location>
        <position position="119"/>
    </location>
    <ligand>
        <name>substrate</name>
    </ligand>
</feature>
<feature type="binding site" evidence="1">
    <location>
        <position position="152"/>
    </location>
    <ligand>
        <name>substrate</name>
    </ligand>
</feature>
<feature type="binding site" evidence="1">
    <location>
        <position position="202"/>
    </location>
    <ligand>
        <name>ATP</name>
        <dbReference type="ChEBI" id="CHEBI:30616"/>
    </ligand>
</feature>
<feature type="binding site" evidence="1">
    <location>
        <position position="325"/>
    </location>
    <ligand>
        <name>ATP</name>
        <dbReference type="ChEBI" id="CHEBI:30616"/>
    </ligand>
</feature>
<feature type="binding site" evidence="1">
    <location>
        <begin position="355"/>
        <end position="358"/>
    </location>
    <ligand>
        <name>ATP</name>
        <dbReference type="ChEBI" id="CHEBI:30616"/>
    </ligand>
</feature>
<comment type="catalytic activity">
    <reaction evidence="1">
        <text>(2R)-3-phosphoglycerate + ATP = (2R)-3-phospho-glyceroyl phosphate + ADP</text>
        <dbReference type="Rhea" id="RHEA:14801"/>
        <dbReference type="ChEBI" id="CHEBI:30616"/>
        <dbReference type="ChEBI" id="CHEBI:57604"/>
        <dbReference type="ChEBI" id="CHEBI:58272"/>
        <dbReference type="ChEBI" id="CHEBI:456216"/>
        <dbReference type="EC" id="2.7.2.3"/>
    </reaction>
</comment>
<comment type="pathway">
    <text evidence="1">Carbohydrate degradation; glycolysis; pyruvate from D-glyceraldehyde 3-phosphate: step 2/5.</text>
</comment>
<comment type="subunit">
    <text evidence="1">Monomer.</text>
</comment>
<comment type="subcellular location">
    <subcellularLocation>
        <location evidence="1">Cytoplasm</location>
    </subcellularLocation>
</comment>
<comment type="similarity">
    <text evidence="1">Belongs to the phosphoglycerate kinase family.</text>
</comment>
<reference key="1">
    <citation type="journal article" date="2008" name="DNA Res.">
        <title>The whole-genome sequencing of the obligate intracellular bacterium Orientia tsutsugamushi revealed massive gene amplification during reductive genome evolution.</title>
        <authorList>
            <person name="Nakayama K."/>
            <person name="Yamashita A."/>
            <person name="Kurokawa K."/>
            <person name="Morimoto T."/>
            <person name="Ogawa M."/>
            <person name="Fukuhara M."/>
            <person name="Urakami H."/>
            <person name="Ohnishi M."/>
            <person name="Uchiyama I."/>
            <person name="Ogura Y."/>
            <person name="Ooka T."/>
            <person name="Oshima K."/>
            <person name="Tamura A."/>
            <person name="Hattori M."/>
            <person name="Hayashi T."/>
        </authorList>
    </citation>
    <scope>NUCLEOTIDE SEQUENCE [LARGE SCALE GENOMIC DNA]</scope>
    <source>
        <strain>Ikeda</strain>
    </source>
</reference>
<organism>
    <name type="scientific">Orientia tsutsugamushi (strain Ikeda)</name>
    <name type="common">Rickettsia tsutsugamushi</name>
    <dbReference type="NCBI Taxonomy" id="334380"/>
    <lineage>
        <taxon>Bacteria</taxon>
        <taxon>Pseudomonadati</taxon>
        <taxon>Pseudomonadota</taxon>
        <taxon>Alphaproteobacteria</taxon>
        <taxon>Rickettsiales</taxon>
        <taxon>Rickettsiaceae</taxon>
        <taxon>Rickettsieae</taxon>
        <taxon>Orientia</taxon>
    </lineage>
</organism>
<proteinExistence type="inferred from homology"/>
<protein>
    <recommendedName>
        <fullName evidence="1">Phosphoglycerate kinase</fullName>
        <ecNumber evidence="1">2.7.2.3</ecNumber>
    </recommendedName>
</protein>
<keyword id="KW-0067">ATP-binding</keyword>
<keyword id="KW-0963">Cytoplasm</keyword>
<keyword id="KW-0324">Glycolysis</keyword>
<keyword id="KW-0418">Kinase</keyword>
<keyword id="KW-0547">Nucleotide-binding</keyword>
<keyword id="KW-0808">Transferase</keyword>
<evidence type="ECO:0000255" key="1">
    <source>
        <dbReference type="HAMAP-Rule" id="MF_00145"/>
    </source>
</evidence>
<sequence length="406" mass="43938">MIQLRQLSDVIVKDKVVLLRLDLNIPQEGGKITDNTRIVRTIPTIKYLILHGAKVVIISHLGNPKGRIELTLSLRSVVTELEALLNIKVQFCPESIGSTPKNAIIKMKAGEVLLLENLRFNSGEELNDATFVNELSSLGDIYVNDAFSCSHRKHASICGLPAKLPSAAGFLLLSELKHLTSIFSNANKPFTVIIGGAKMSTKLDLLNSLITKADYLIVAGAMANIFLAMKRFNIGASLYKPELVNVASLILKKATSTNCKIILPFDAVIQNFNSNNITIIELNSSLVMQSNAKIMDIGPKTIAQIINIIKISKTIVWNGPVGAFEQLPFDHGSTYLSKAIAEKTRTGSLCSVAGGGDTISAIKKSGVIDDFSYISTGGGAFLEWLQGKTLPGVEALMQKLDTAKYI</sequence>
<accession>B3CQC3</accession>
<name>PGK_ORITI</name>